<gene>
    <name evidence="1" type="primary">hscB</name>
    <name type="ordered locus">SbBS512_E2902</name>
</gene>
<feature type="chain" id="PRO_1000131757" description="Co-chaperone protein HscB">
    <location>
        <begin position="1"/>
        <end position="171"/>
    </location>
</feature>
<feature type="domain" description="J" evidence="1">
    <location>
        <begin position="2"/>
        <end position="74"/>
    </location>
</feature>
<evidence type="ECO:0000255" key="1">
    <source>
        <dbReference type="HAMAP-Rule" id="MF_00682"/>
    </source>
</evidence>
<dbReference type="EMBL" id="CP001063">
    <property type="protein sequence ID" value="ACD09348.1"/>
    <property type="molecule type" value="Genomic_DNA"/>
</dbReference>
<dbReference type="RefSeq" id="WP_000384413.1">
    <property type="nucleotide sequence ID" value="NC_010658.1"/>
</dbReference>
<dbReference type="SMR" id="B2TXV2"/>
<dbReference type="STRING" id="344609.SbBS512_E2902"/>
<dbReference type="GeneID" id="75172640"/>
<dbReference type="KEGG" id="sbc:SbBS512_E2902"/>
<dbReference type="HOGENOM" id="CLU_068529_2_0_6"/>
<dbReference type="Proteomes" id="UP000001030">
    <property type="component" value="Chromosome"/>
</dbReference>
<dbReference type="GO" id="GO:1990230">
    <property type="term" value="C:iron-sulfur cluster transfer complex"/>
    <property type="evidence" value="ECO:0007669"/>
    <property type="project" value="TreeGrafter"/>
</dbReference>
<dbReference type="GO" id="GO:0001671">
    <property type="term" value="F:ATPase activator activity"/>
    <property type="evidence" value="ECO:0007669"/>
    <property type="project" value="InterPro"/>
</dbReference>
<dbReference type="GO" id="GO:0051087">
    <property type="term" value="F:protein-folding chaperone binding"/>
    <property type="evidence" value="ECO:0007669"/>
    <property type="project" value="InterPro"/>
</dbReference>
<dbReference type="GO" id="GO:0044571">
    <property type="term" value="P:[2Fe-2S] cluster assembly"/>
    <property type="evidence" value="ECO:0007669"/>
    <property type="project" value="InterPro"/>
</dbReference>
<dbReference type="GO" id="GO:0051259">
    <property type="term" value="P:protein complex oligomerization"/>
    <property type="evidence" value="ECO:0007669"/>
    <property type="project" value="InterPro"/>
</dbReference>
<dbReference type="GO" id="GO:0006457">
    <property type="term" value="P:protein folding"/>
    <property type="evidence" value="ECO:0007669"/>
    <property type="project" value="UniProtKB-UniRule"/>
</dbReference>
<dbReference type="CDD" id="cd06257">
    <property type="entry name" value="DnaJ"/>
    <property type="match status" value="1"/>
</dbReference>
<dbReference type="FunFam" id="1.10.287.110:FF:000008">
    <property type="entry name" value="Co-chaperone protein HscB"/>
    <property type="match status" value="1"/>
</dbReference>
<dbReference type="FunFam" id="1.20.1280.20:FF:000001">
    <property type="entry name" value="Co-chaperone protein HscB"/>
    <property type="match status" value="1"/>
</dbReference>
<dbReference type="Gene3D" id="1.10.287.110">
    <property type="entry name" value="DnaJ domain"/>
    <property type="match status" value="1"/>
</dbReference>
<dbReference type="Gene3D" id="1.20.1280.20">
    <property type="entry name" value="HscB, C-terminal domain"/>
    <property type="match status" value="1"/>
</dbReference>
<dbReference type="HAMAP" id="MF_00682">
    <property type="entry name" value="HscB"/>
    <property type="match status" value="1"/>
</dbReference>
<dbReference type="InterPro" id="IPR001623">
    <property type="entry name" value="DnaJ_domain"/>
</dbReference>
<dbReference type="InterPro" id="IPR004640">
    <property type="entry name" value="HscB"/>
</dbReference>
<dbReference type="InterPro" id="IPR036386">
    <property type="entry name" value="HscB_C_sf"/>
</dbReference>
<dbReference type="InterPro" id="IPR009073">
    <property type="entry name" value="HscB_oligo_C"/>
</dbReference>
<dbReference type="InterPro" id="IPR036869">
    <property type="entry name" value="J_dom_sf"/>
</dbReference>
<dbReference type="NCBIfam" id="TIGR00714">
    <property type="entry name" value="hscB"/>
    <property type="match status" value="1"/>
</dbReference>
<dbReference type="NCBIfam" id="NF003449">
    <property type="entry name" value="PRK05014.1"/>
    <property type="match status" value="1"/>
</dbReference>
<dbReference type="PANTHER" id="PTHR14021">
    <property type="entry name" value="IRON-SULFUR CLUSTER CO-CHAPERONE PROTEIN HSCB"/>
    <property type="match status" value="1"/>
</dbReference>
<dbReference type="PANTHER" id="PTHR14021:SF15">
    <property type="entry name" value="IRON-SULFUR CLUSTER CO-CHAPERONE PROTEIN HSCB"/>
    <property type="match status" value="1"/>
</dbReference>
<dbReference type="Pfam" id="PF07743">
    <property type="entry name" value="HSCB_C"/>
    <property type="match status" value="1"/>
</dbReference>
<dbReference type="SMART" id="SM00271">
    <property type="entry name" value="DnaJ"/>
    <property type="match status" value="1"/>
</dbReference>
<dbReference type="SUPFAM" id="SSF46565">
    <property type="entry name" value="Chaperone J-domain"/>
    <property type="match status" value="1"/>
</dbReference>
<dbReference type="SUPFAM" id="SSF47144">
    <property type="entry name" value="HSC20 (HSCB), C-terminal oligomerisation domain"/>
    <property type="match status" value="1"/>
</dbReference>
<dbReference type="PROSITE" id="PS50076">
    <property type="entry name" value="DNAJ_2"/>
    <property type="match status" value="1"/>
</dbReference>
<reference key="1">
    <citation type="submission" date="2008-05" db="EMBL/GenBank/DDBJ databases">
        <title>Complete sequence of Shigella boydii serotype 18 strain BS512.</title>
        <authorList>
            <person name="Rasko D.A."/>
            <person name="Rosovitz M."/>
            <person name="Maurelli A.T."/>
            <person name="Myers G."/>
            <person name="Seshadri R."/>
            <person name="Cer R."/>
            <person name="Jiang L."/>
            <person name="Ravel J."/>
            <person name="Sebastian Y."/>
        </authorList>
    </citation>
    <scope>NUCLEOTIDE SEQUENCE [LARGE SCALE GENOMIC DNA]</scope>
    <source>
        <strain>CDC 3083-94 / BS512</strain>
    </source>
</reference>
<organism>
    <name type="scientific">Shigella boydii serotype 18 (strain CDC 3083-94 / BS512)</name>
    <dbReference type="NCBI Taxonomy" id="344609"/>
    <lineage>
        <taxon>Bacteria</taxon>
        <taxon>Pseudomonadati</taxon>
        <taxon>Pseudomonadota</taxon>
        <taxon>Gammaproteobacteria</taxon>
        <taxon>Enterobacterales</taxon>
        <taxon>Enterobacteriaceae</taxon>
        <taxon>Shigella</taxon>
    </lineage>
</organism>
<sequence length="171" mass="20138">MDYFTLFGLPARYQLDTQALSLRFQDLQRQYHPDKFASGSQAEQLAAVQQSATINQAWQTLRHPLMRAEYLLSLHGFDLASEQHTVRDTAFLMEQLELREELDEIEQAKDEARLESFIKRVKKMFDTRHQLMVEQLDNETWDAAADTVRKLRFLDKLRSSAEQLEEKLLDF</sequence>
<name>HSCB_SHIB3</name>
<comment type="function">
    <text evidence="1">Co-chaperone involved in the maturation of iron-sulfur cluster-containing proteins. Seems to help targeting proteins to be folded toward HscA.</text>
</comment>
<comment type="subunit">
    <text evidence="1">Interacts with HscA and stimulates its ATPase activity. Interacts with IscU.</text>
</comment>
<comment type="similarity">
    <text evidence="1">Belongs to the HscB family.</text>
</comment>
<accession>B2TXV2</accession>
<proteinExistence type="inferred from homology"/>
<keyword id="KW-0143">Chaperone</keyword>
<keyword id="KW-1185">Reference proteome</keyword>
<protein>
    <recommendedName>
        <fullName evidence="1">Co-chaperone protein HscB</fullName>
    </recommendedName>
    <alternativeName>
        <fullName evidence="1">Hsc20</fullName>
    </alternativeName>
</protein>